<gene>
    <name evidence="2" type="primary">recA</name>
    <name type="ordered locus">MSMEG_2723</name>
    <name type="ordered locus">MSMEI_2656</name>
</gene>
<evidence type="ECO:0000250" key="1"/>
<evidence type="ECO:0000255" key="2">
    <source>
        <dbReference type="HAMAP-Rule" id="MF_00268"/>
    </source>
</evidence>
<evidence type="ECO:0000269" key="3">
    <source>
    </source>
</evidence>
<evidence type="ECO:0000269" key="4">
    <source>
    </source>
</evidence>
<evidence type="ECO:0000269" key="5">
    <source>
    </source>
</evidence>
<evidence type="ECO:0000269" key="6">
    <source>
    </source>
</evidence>
<evidence type="ECO:0000269" key="7">
    <source>
    </source>
</evidence>
<evidence type="ECO:0007829" key="8">
    <source>
        <dbReference type="PDB" id="1UBG"/>
    </source>
</evidence>
<evidence type="ECO:0007829" key="9">
    <source>
        <dbReference type="PDB" id="2ZR9"/>
    </source>
</evidence>
<evidence type="ECO:0007829" key="10">
    <source>
        <dbReference type="PDB" id="2ZRE"/>
    </source>
</evidence>
<evidence type="ECO:0007829" key="11">
    <source>
        <dbReference type="PDB" id="2ZRJ"/>
    </source>
</evidence>
<evidence type="ECO:0007829" key="12">
    <source>
        <dbReference type="PDB" id="2ZRM"/>
    </source>
</evidence>
<evidence type="ECO:0007829" key="13">
    <source>
        <dbReference type="PDB" id="2ZRP"/>
    </source>
</evidence>
<name>RECA_MYCS2</name>
<accession>Q59560</accession>
<accession>A0QVW9</accession>
<accession>I7G989</accession>
<keyword id="KW-0002">3D-structure</keyword>
<keyword id="KW-0067">ATP-binding</keyword>
<keyword id="KW-0963">Cytoplasm</keyword>
<keyword id="KW-0227">DNA damage</keyword>
<keyword id="KW-0233">DNA recombination</keyword>
<keyword id="KW-0234">DNA repair</keyword>
<keyword id="KW-0238">DNA-binding</keyword>
<keyword id="KW-0547">Nucleotide-binding</keyword>
<keyword id="KW-1185">Reference proteome</keyword>
<keyword id="KW-0742">SOS response</keyword>
<organism>
    <name type="scientific">Mycolicibacterium smegmatis (strain ATCC 700084 / mc(2)155)</name>
    <name type="common">Mycobacterium smegmatis</name>
    <dbReference type="NCBI Taxonomy" id="246196"/>
    <lineage>
        <taxon>Bacteria</taxon>
        <taxon>Bacillati</taxon>
        <taxon>Actinomycetota</taxon>
        <taxon>Actinomycetes</taxon>
        <taxon>Mycobacteriales</taxon>
        <taxon>Mycobacteriaceae</taxon>
        <taxon>Mycolicibacterium</taxon>
    </lineage>
</organism>
<dbReference type="EMBL" id="X99208">
    <property type="protein sequence ID" value="CAA67597.1"/>
    <property type="molecule type" value="Genomic_DNA"/>
</dbReference>
<dbReference type="EMBL" id="CP000480">
    <property type="protein sequence ID" value="ABK74334.1"/>
    <property type="molecule type" value="Genomic_DNA"/>
</dbReference>
<dbReference type="EMBL" id="CP001663">
    <property type="protein sequence ID" value="AFP39124.1"/>
    <property type="molecule type" value="Genomic_DNA"/>
</dbReference>
<dbReference type="RefSeq" id="WP_003894107.1">
    <property type="nucleotide sequence ID" value="NZ_SIJM01000032.1"/>
</dbReference>
<dbReference type="RefSeq" id="YP_887057.1">
    <property type="nucleotide sequence ID" value="NC_008596.1"/>
</dbReference>
<dbReference type="PDB" id="1UBC">
    <property type="method" value="X-ray"/>
    <property type="resolution" value="3.80 A"/>
    <property type="chains" value="A=1-349"/>
</dbReference>
<dbReference type="PDB" id="1UBE">
    <property type="method" value="X-ray"/>
    <property type="resolution" value="3.30 A"/>
    <property type="chains" value="A=1-349"/>
</dbReference>
<dbReference type="PDB" id="1UBF">
    <property type="method" value="X-ray"/>
    <property type="resolution" value="3.50 A"/>
    <property type="chains" value="A=1-349"/>
</dbReference>
<dbReference type="PDB" id="1UBG">
    <property type="method" value="X-ray"/>
    <property type="resolution" value="3.50 A"/>
    <property type="chains" value="A=1-349"/>
</dbReference>
<dbReference type="PDB" id="2G88">
    <property type="method" value="X-ray"/>
    <property type="resolution" value="3.20 A"/>
    <property type="chains" value="A=1-349"/>
</dbReference>
<dbReference type="PDB" id="2ODN">
    <property type="method" value="X-ray"/>
    <property type="resolution" value="3.10 A"/>
    <property type="chains" value="A=1-349"/>
</dbReference>
<dbReference type="PDB" id="2ODW">
    <property type="method" value="X-ray"/>
    <property type="resolution" value="3.30 A"/>
    <property type="chains" value="A=1-349"/>
</dbReference>
<dbReference type="PDB" id="2OE2">
    <property type="method" value="X-ray"/>
    <property type="resolution" value="3.45 A"/>
    <property type="chains" value="A=1-349"/>
</dbReference>
<dbReference type="PDB" id="2OEP">
    <property type="method" value="X-ray"/>
    <property type="resolution" value="3.10 A"/>
    <property type="chains" value="A=1-349"/>
</dbReference>
<dbReference type="PDB" id="2OES">
    <property type="method" value="X-ray"/>
    <property type="resolution" value="3.50 A"/>
    <property type="chains" value="A=1-349"/>
</dbReference>
<dbReference type="PDB" id="2OFO">
    <property type="method" value="X-ray"/>
    <property type="resolution" value="3.16 A"/>
    <property type="chains" value="A=1-349"/>
</dbReference>
<dbReference type="PDB" id="2ZR0">
    <property type="method" value="X-ray"/>
    <property type="resolution" value="3.00 A"/>
    <property type="chains" value="A=1-349"/>
</dbReference>
<dbReference type="PDB" id="2ZR7">
    <property type="method" value="X-ray"/>
    <property type="resolution" value="3.60 A"/>
    <property type="chains" value="A=1-349"/>
</dbReference>
<dbReference type="PDB" id="2ZR9">
    <property type="method" value="X-ray"/>
    <property type="resolution" value="2.50 A"/>
    <property type="chains" value="A=1-349"/>
</dbReference>
<dbReference type="PDB" id="2ZRA">
    <property type="method" value="X-ray"/>
    <property type="resolution" value="3.10 A"/>
    <property type="chains" value="A=1-349"/>
</dbReference>
<dbReference type="PDB" id="2ZRB">
    <property type="method" value="X-ray"/>
    <property type="resolution" value="3.25 A"/>
    <property type="chains" value="A=1-349"/>
</dbReference>
<dbReference type="PDB" id="2ZRC">
    <property type="method" value="X-ray"/>
    <property type="resolution" value="3.10 A"/>
    <property type="chains" value="A=1-349"/>
</dbReference>
<dbReference type="PDB" id="2ZRD">
    <property type="method" value="X-ray"/>
    <property type="resolution" value="3.10 A"/>
    <property type="chains" value="A=1-349"/>
</dbReference>
<dbReference type="PDB" id="2ZRE">
    <property type="method" value="X-ray"/>
    <property type="resolution" value="2.90 A"/>
    <property type="chains" value="A=1-349"/>
</dbReference>
<dbReference type="PDB" id="2ZRF">
    <property type="method" value="X-ray"/>
    <property type="resolution" value="3.00 A"/>
    <property type="chains" value="A=1-349"/>
</dbReference>
<dbReference type="PDB" id="2ZRG">
    <property type="method" value="X-ray"/>
    <property type="resolution" value="3.50 A"/>
    <property type="chains" value="A=1-349"/>
</dbReference>
<dbReference type="PDB" id="2ZRH">
    <property type="method" value="X-ray"/>
    <property type="resolution" value="3.20 A"/>
    <property type="chains" value="A=1-349"/>
</dbReference>
<dbReference type="PDB" id="2ZRI">
    <property type="method" value="X-ray"/>
    <property type="resolution" value="3.30 A"/>
    <property type="chains" value="A=1-349"/>
</dbReference>
<dbReference type="PDB" id="2ZRJ">
    <property type="method" value="X-ray"/>
    <property type="resolution" value="2.60 A"/>
    <property type="chains" value="A=1-349"/>
</dbReference>
<dbReference type="PDB" id="2ZRK">
    <property type="method" value="X-ray"/>
    <property type="resolution" value="3.20 A"/>
    <property type="chains" value="A=1-349"/>
</dbReference>
<dbReference type="PDB" id="2ZRL">
    <property type="method" value="X-ray"/>
    <property type="resolution" value="3.70 A"/>
    <property type="chains" value="A=1-349"/>
</dbReference>
<dbReference type="PDB" id="2ZRM">
    <property type="method" value="X-ray"/>
    <property type="resolution" value="2.80 A"/>
    <property type="chains" value="A=1-349"/>
</dbReference>
<dbReference type="PDB" id="2ZRN">
    <property type="method" value="X-ray"/>
    <property type="resolution" value="3.30 A"/>
    <property type="chains" value="A=1-349"/>
</dbReference>
<dbReference type="PDB" id="2ZRO">
    <property type="method" value="X-ray"/>
    <property type="resolution" value="2.90 A"/>
    <property type="chains" value="A=1-349"/>
</dbReference>
<dbReference type="PDB" id="2ZRP">
    <property type="method" value="X-ray"/>
    <property type="resolution" value="3.30 A"/>
    <property type="chains" value="A=1-349"/>
</dbReference>
<dbReference type="PDBsum" id="1UBC"/>
<dbReference type="PDBsum" id="1UBE"/>
<dbReference type="PDBsum" id="1UBF"/>
<dbReference type="PDBsum" id="1UBG"/>
<dbReference type="PDBsum" id="2G88"/>
<dbReference type="PDBsum" id="2ODN"/>
<dbReference type="PDBsum" id="2ODW"/>
<dbReference type="PDBsum" id="2OE2"/>
<dbReference type="PDBsum" id="2OEP"/>
<dbReference type="PDBsum" id="2OES"/>
<dbReference type="PDBsum" id="2OFO"/>
<dbReference type="PDBsum" id="2ZR0"/>
<dbReference type="PDBsum" id="2ZR7"/>
<dbReference type="PDBsum" id="2ZR9"/>
<dbReference type="PDBsum" id="2ZRA"/>
<dbReference type="PDBsum" id="2ZRB"/>
<dbReference type="PDBsum" id="2ZRC"/>
<dbReference type="PDBsum" id="2ZRD"/>
<dbReference type="PDBsum" id="2ZRE"/>
<dbReference type="PDBsum" id="2ZRF"/>
<dbReference type="PDBsum" id="2ZRG"/>
<dbReference type="PDBsum" id="2ZRH"/>
<dbReference type="PDBsum" id="2ZRI"/>
<dbReference type="PDBsum" id="2ZRJ"/>
<dbReference type="PDBsum" id="2ZRK"/>
<dbReference type="PDBsum" id="2ZRL"/>
<dbReference type="PDBsum" id="2ZRM"/>
<dbReference type="PDBsum" id="2ZRN"/>
<dbReference type="PDBsum" id="2ZRO"/>
<dbReference type="PDBsum" id="2ZRP"/>
<dbReference type="SMR" id="Q59560"/>
<dbReference type="STRING" id="246196.MSMEG_2723"/>
<dbReference type="DrugBank" id="DB02930">
    <property type="generic name" value="Adenosine 5'-[gamma-thio]triphosphate"/>
</dbReference>
<dbReference type="DrugBank" id="DB03222">
    <property type="generic name" value="dATP"/>
</dbReference>
<dbReference type="PaxDb" id="246196-MSMEI_2656"/>
<dbReference type="GeneID" id="93457506"/>
<dbReference type="KEGG" id="msb:LJ00_13540"/>
<dbReference type="KEGG" id="msg:MSMEI_2656"/>
<dbReference type="KEGG" id="msm:MSMEG_2723"/>
<dbReference type="PATRIC" id="fig|246196.19.peg.2690"/>
<dbReference type="eggNOG" id="COG0468">
    <property type="taxonomic scope" value="Bacteria"/>
</dbReference>
<dbReference type="OrthoDB" id="9776733at2"/>
<dbReference type="EvolutionaryTrace" id="Q59560"/>
<dbReference type="Proteomes" id="UP000000757">
    <property type="component" value="Chromosome"/>
</dbReference>
<dbReference type="Proteomes" id="UP000006158">
    <property type="component" value="Chromosome"/>
</dbReference>
<dbReference type="GO" id="GO:0005829">
    <property type="term" value="C:cytosol"/>
    <property type="evidence" value="ECO:0007669"/>
    <property type="project" value="TreeGrafter"/>
</dbReference>
<dbReference type="GO" id="GO:0005524">
    <property type="term" value="F:ATP binding"/>
    <property type="evidence" value="ECO:0007669"/>
    <property type="project" value="UniProtKB-UniRule"/>
</dbReference>
<dbReference type="GO" id="GO:0016887">
    <property type="term" value="F:ATP hydrolysis activity"/>
    <property type="evidence" value="ECO:0007669"/>
    <property type="project" value="InterPro"/>
</dbReference>
<dbReference type="GO" id="GO:0140664">
    <property type="term" value="F:ATP-dependent DNA damage sensor activity"/>
    <property type="evidence" value="ECO:0007669"/>
    <property type="project" value="InterPro"/>
</dbReference>
<dbReference type="GO" id="GO:0003684">
    <property type="term" value="F:damaged DNA binding"/>
    <property type="evidence" value="ECO:0007669"/>
    <property type="project" value="UniProtKB-UniRule"/>
</dbReference>
<dbReference type="GO" id="GO:0003697">
    <property type="term" value="F:single-stranded DNA binding"/>
    <property type="evidence" value="ECO:0007669"/>
    <property type="project" value="UniProtKB-UniRule"/>
</dbReference>
<dbReference type="GO" id="GO:0006310">
    <property type="term" value="P:DNA recombination"/>
    <property type="evidence" value="ECO:0007669"/>
    <property type="project" value="UniProtKB-UniRule"/>
</dbReference>
<dbReference type="GO" id="GO:0006281">
    <property type="term" value="P:DNA repair"/>
    <property type="evidence" value="ECO:0007669"/>
    <property type="project" value="UniProtKB-UniRule"/>
</dbReference>
<dbReference type="GO" id="GO:0009432">
    <property type="term" value="P:SOS response"/>
    <property type="evidence" value="ECO:0007669"/>
    <property type="project" value="UniProtKB-UniRule"/>
</dbReference>
<dbReference type="CDD" id="cd00983">
    <property type="entry name" value="RecA"/>
    <property type="match status" value="1"/>
</dbReference>
<dbReference type="FunFam" id="3.40.50.300:FF:002436">
    <property type="entry name" value="Protein RecA"/>
    <property type="match status" value="1"/>
</dbReference>
<dbReference type="Gene3D" id="3.40.50.300">
    <property type="entry name" value="P-loop containing nucleotide triphosphate hydrolases"/>
    <property type="match status" value="1"/>
</dbReference>
<dbReference type="HAMAP" id="MF_00268">
    <property type="entry name" value="RecA"/>
    <property type="match status" value="1"/>
</dbReference>
<dbReference type="InterPro" id="IPR003593">
    <property type="entry name" value="AAA+_ATPase"/>
</dbReference>
<dbReference type="InterPro" id="IPR013765">
    <property type="entry name" value="DNA_recomb/repair_RecA"/>
</dbReference>
<dbReference type="InterPro" id="IPR020584">
    <property type="entry name" value="DNA_recomb/repair_RecA_CS"/>
</dbReference>
<dbReference type="InterPro" id="IPR027417">
    <property type="entry name" value="P-loop_NTPase"/>
</dbReference>
<dbReference type="InterPro" id="IPR049261">
    <property type="entry name" value="RecA-like_C"/>
</dbReference>
<dbReference type="InterPro" id="IPR049428">
    <property type="entry name" value="RecA-like_N"/>
</dbReference>
<dbReference type="InterPro" id="IPR020588">
    <property type="entry name" value="RecA_ATP-bd"/>
</dbReference>
<dbReference type="InterPro" id="IPR023400">
    <property type="entry name" value="RecA_C_sf"/>
</dbReference>
<dbReference type="InterPro" id="IPR020587">
    <property type="entry name" value="RecA_monomer-monomer_interface"/>
</dbReference>
<dbReference type="NCBIfam" id="TIGR02012">
    <property type="entry name" value="tigrfam_recA"/>
    <property type="match status" value="1"/>
</dbReference>
<dbReference type="PANTHER" id="PTHR45900:SF1">
    <property type="entry name" value="MITOCHONDRIAL DNA REPAIR PROTEIN RECA HOMOLOG-RELATED"/>
    <property type="match status" value="1"/>
</dbReference>
<dbReference type="PANTHER" id="PTHR45900">
    <property type="entry name" value="RECA"/>
    <property type="match status" value="1"/>
</dbReference>
<dbReference type="Pfam" id="PF00154">
    <property type="entry name" value="RecA"/>
    <property type="match status" value="1"/>
</dbReference>
<dbReference type="Pfam" id="PF21096">
    <property type="entry name" value="RecA_C"/>
    <property type="match status" value="1"/>
</dbReference>
<dbReference type="PRINTS" id="PR00142">
    <property type="entry name" value="RECA"/>
</dbReference>
<dbReference type="SMART" id="SM00382">
    <property type="entry name" value="AAA"/>
    <property type="match status" value="1"/>
</dbReference>
<dbReference type="SUPFAM" id="SSF52540">
    <property type="entry name" value="P-loop containing nucleoside triphosphate hydrolases"/>
    <property type="match status" value="1"/>
</dbReference>
<dbReference type="SUPFAM" id="SSF54752">
    <property type="entry name" value="RecA protein, C-terminal domain"/>
    <property type="match status" value="1"/>
</dbReference>
<dbReference type="PROSITE" id="PS00321">
    <property type="entry name" value="RECA_1"/>
    <property type="match status" value="1"/>
</dbReference>
<dbReference type="PROSITE" id="PS50162">
    <property type="entry name" value="RECA_2"/>
    <property type="match status" value="1"/>
</dbReference>
<dbReference type="PROSITE" id="PS50163">
    <property type="entry name" value="RECA_3"/>
    <property type="match status" value="1"/>
</dbReference>
<proteinExistence type="evidence at protein level"/>
<sequence>MAQQAPDREKALELAMAQIDKNFGKGSVMRLGEEVRQPISVIPTGSISLDVALGIGGLPRGRVIEIYGPESSGKTTVALHAVANAQAAGGIAAFIDAEHALDPEYAKKLGVDTDSLLVSQPDTGEQALEIADMLVRSGALDIIVIDSVAALVPRAEIEGEMGDSHVGLQARLMSQALRKMTGALNNSGTTAIFINQLREKIGVMFGSPETTTGGKALKFYASVRLDVRRIETLKDGTDAVGNRTRVKVVKNKVSPPFKQAEFDILYGQGISREGSLIDMGVEHGFIRKSGSWFTYEGEQLGQGKENARKFLLENTDVANEIEKKIKEKLGIGAVVTAEADDVLPAPVDF</sequence>
<reference key="1">
    <citation type="journal article" date="1998" name="Mol. Microbiol.">
        <title>Construction and complementation of a recA deletion mutant of Mycobacterium smegmatis reveals that the intein in Mycobacterium tuberculosis recA does not affect RecA function.</title>
        <authorList>
            <person name="Papavinasasundaram K.G."/>
            <person name="Colston M.J."/>
            <person name="Davis E.O."/>
        </authorList>
    </citation>
    <scope>NUCLEOTIDE SEQUENCE [GENOMIC DNA]</scope>
</reference>
<reference key="2">
    <citation type="submission" date="2006-10" db="EMBL/GenBank/DDBJ databases">
        <authorList>
            <person name="Fleischmann R.D."/>
            <person name="Dodson R.J."/>
            <person name="Haft D.H."/>
            <person name="Merkel J.S."/>
            <person name="Nelson W.C."/>
            <person name="Fraser C.M."/>
        </authorList>
    </citation>
    <scope>NUCLEOTIDE SEQUENCE [LARGE SCALE GENOMIC DNA]</scope>
    <source>
        <strain>ATCC 700084 / mc(2)155</strain>
    </source>
</reference>
<reference key="3">
    <citation type="journal article" date="2007" name="Genome Biol.">
        <title>Interrupted coding sequences in Mycobacterium smegmatis: authentic mutations or sequencing errors?</title>
        <authorList>
            <person name="Deshayes C."/>
            <person name="Perrodou E."/>
            <person name="Gallien S."/>
            <person name="Euphrasie D."/>
            <person name="Schaeffer C."/>
            <person name="Van-Dorsselaer A."/>
            <person name="Poch O."/>
            <person name="Lecompte O."/>
            <person name="Reyrat J.-M."/>
        </authorList>
    </citation>
    <scope>NUCLEOTIDE SEQUENCE [LARGE SCALE GENOMIC DNA]</scope>
    <source>
        <strain>ATCC 700084 / mc(2)155</strain>
    </source>
</reference>
<reference key="4">
    <citation type="journal article" date="2009" name="Genome Res.">
        <title>Ortho-proteogenomics: multiple proteomes investigation through orthology and a new MS-based protocol.</title>
        <authorList>
            <person name="Gallien S."/>
            <person name="Perrodou E."/>
            <person name="Carapito C."/>
            <person name="Deshayes C."/>
            <person name="Reyrat J.-M."/>
            <person name="Van Dorsselaer A."/>
            <person name="Poch O."/>
            <person name="Schaeffer C."/>
            <person name="Lecompte O."/>
        </authorList>
    </citation>
    <scope>NUCLEOTIDE SEQUENCE [LARGE SCALE GENOMIC DNA]</scope>
    <source>
        <strain>ATCC 700084 / mc(2)155</strain>
    </source>
</reference>
<reference key="5">
    <citation type="journal article" date="2007" name="DNA Repair">
        <title>NHEJ protects mycobacteria in stationary phase against the harmful effects of desiccation.</title>
        <authorList>
            <person name="Pitcher R.S."/>
            <person name="Green A.J."/>
            <person name="Brzostek A."/>
            <person name="Korycka-Machala M."/>
            <person name="Dziadek J."/>
            <person name="Doherty A.J."/>
        </authorList>
    </citation>
    <scope>FUNCTION</scope>
    <scope>DISRUPTION PHENOTYPE</scope>
    <source>
        <strain>ATCC 700084 / mc(2)155</strain>
    </source>
</reference>
<reference key="6">
    <citation type="journal article" date="2007" name="J. Bacteriol.">
        <title>Mycobacterial nonhomologous end joining mediates mutagenic repair of chromosomal double-strand DNA breaks.</title>
        <authorList>
            <person name="Stephanou N.C."/>
            <person name="Gao F."/>
            <person name="Bongiorno P."/>
            <person name="Ehrt S."/>
            <person name="Schnappinger D."/>
            <person name="Shuman S."/>
            <person name="Glickman M.S."/>
        </authorList>
    </citation>
    <scope>FUNCTION</scope>
    <scope>DISRUPTION PHENOTYPE</scope>
    <source>
        <strain>ATCC 700084 / mc(2)155</strain>
    </source>
</reference>
<reference key="7">
    <citation type="journal article" date="2011" name="Mol. Microbiol.">
        <title>Mycobacteria exploit three genetically distinct DNA double-strand break repair pathways.</title>
        <authorList>
            <person name="Gupta R."/>
            <person name="Barkan D."/>
            <person name="Redelman-Sidi G."/>
            <person name="Shuman S."/>
            <person name="Glickman M.S."/>
        </authorList>
    </citation>
    <scope>FUNCTION</scope>
    <scope>DISRUPTION PHENOTYPE</scope>
    <source>
        <strain>ATCC 700084 / mc(2)155</strain>
    </source>
</reference>
<reference key="8">
    <citation type="journal article" date="2003" name="J. Bacteriol.">
        <title>Crystal structures of Mycobacterium smegmatis RecA and its nucleotide complexes.</title>
        <authorList>
            <person name="Datta S."/>
            <person name="Krishna R."/>
            <person name="Ganesh N."/>
            <person name="Chandra N.R."/>
            <person name="Muniyappa K."/>
            <person name="Vijayan M."/>
        </authorList>
    </citation>
    <scope>X-RAY CRYSTALLOGRAPHY (3.30 ANGSTROMS) WITH AND WITHOUT ATP</scope>
</reference>
<reference key="9">
    <citation type="journal article" date="2007" name="J. Mol. Biol.">
        <title>Snapshots of RecA protein involving movement of the C-domain and different conformations of the DNA-binding loops: crystallographic and comparative analysis of 11 structures of Mycobacterium smegmatis RecA.</title>
        <authorList>
            <person name="Krishna R."/>
            <person name="Prabu J.R."/>
            <person name="Manjunath G.P."/>
            <person name="Datta S."/>
            <person name="Chandra N.R."/>
            <person name="Muniyappa K."/>
            <person name="Vijayan M."/>
        </authorList>
    </citation>
    <scope>X-RAY CRYSTALLOGRAPHY (3.30 ANGSTROMS) WITH AND WITHOUT ATP</scope>
</reference>
<reference key="10">
    <citation type="journal article" date="2008" name="Acta Crystallogr. D">
        <title>Functionally important movements in RecA molecules and filaments: studies involving mutation and environmental changes.</title>
        <authorList>
            <person name="Prabu J.R."/>
            <person name="Manjunath G.P."/>
            <person name="Chandra N.R."/>
            <person name="Muniyappa K."/>
            <person name="Vijayan M."/>
        </authorList>
    </citation>
    <scope>X-RAY CRYSTALLOGRAPHY (2.50 ANGSTROMS) WITH AND WITHOUT ATP AND PHOSPHATE</scope>
    <scope>MUTAGENESIS OF GLN-196</scope>
</reference>
<feature type="chain" id="PRO_0000122767" description="Protein RecA">
    <location>
        <begin position="1"/>
        <end position="349"/>
    </location>
</feature>
<feature type="binding site" evidence="3 6">
    <location>
        <begin position="71"/>
        <end position="76"/>
    </location>
    <ligand>
        <name>ATP</name>
        <dbReference type="ChEBI" id="CHEBI:30616"/>
    </ligand>
</feature>
<feature type="binding site" evidence="6">
    <location>
        <begin position="71"/>
        <end position="75"/>
    </location>
    <ligand>
        <name>phosphate</name>
        <dbReference type="ChEBI" id="CHEBI:43474"/>
    </ligand>
</feature>
<feature type="binding site" evidence="3 6">
    <location>
        <begin position="102"/>
        <end position="105"/>
    </location>
    <ligand>
        <name>ATP</name>
        <dbReference type="ChEBI" id="CHEBI:30616"/>
    </ligand>
</feature>
<feature type="binding site" evidence="6">
    <location>
        <position position="196"/>
    </location>
    <ligand>
        <name>phosphate</name>
        <dbReference type="ChEBI" id="CHEBI:43474"/>
    </ligand>
</feature>
<feature type="mutagenesis site" description="Loss of residue movement, loss of switch function in crystal structures." evidence="6">
    <original>Q</original>
    <variation>A</variation>
    <variation>E</variation>
    <variation>N</variation>
    <location>
        <position position="196"/>
    </location>
</feature>
<feature type="helix" evidence="9">
    <location>
        <begin position="8"/>
        <end position="23"/>
    </location>
</feature>
<feature type="strand" evidence="13">
    <location>
        <begin position="25"/>
        <end position="28"/>
    </location>
</feature>
<feature type="helix" evidence="9">
    <location>
        <begin position="47"/>
        <end position="52"/>
    </location>
</feature>
<feature type="strand" evidence="9">
    <location>
        <begin position="54"/>
        <end position="59"/>
    </location>
</feature>
<feature type="strand" evidence="9">
    <location>
        <begin position="62"/>
        <end position="69"/>
    </location>
</feature>
<feature type="strand" evidence="8">
    <location>
        <begin position="70"/>
        <end position="73"/>
    </location>
</feature>
<feature type="helix" evidence="9">
    <location>
        <begin position="74"/>
        <end position="87"/>
    </location>
</feature>
<feature type="strand" evidence="9">
    <location>
        <begin position="92"/>
        <end position="98"/>
    </location>
</feature>
<feature type="helix" evidence="9">
    <location>
        <begin position="103"/>
        <end position="108"/>
    </location>
</feature>
<feature type="helix" evidence="9">
    <location>
        <begin position="113"/>
        <end position="115"/>
    </location>
</feature>
<feature type="strand" evidence="9">
    <location>
        <begin position="117"/>
        <end position="119"/>
    </location>
</feature>
<feature type="helix" evidence="9">
    <location>
        <begin position="124"/>
        <end position="135"/>
    </location>
</feature>
<feature type="turn" evidence="9">
    <location>
        <begin position="136"/>
        <end position="138"/>
    </location>
</feature>
<feature type="strand" evidence="9">
    <location>
        <begin position="141"/>
        <end position="146"/>
    </location>
</feature>
<feature type="helix" evidence="9">
    <location>
        <begin position="148"/>
        <end position="150"/>
    </location>
</feature>
<feature type="helix" evidence="9">
    <location>
        <begin position="154"/>
        <end position="157"/>
    </location>
</feature>
<feature type="strand" evidence="12">
    <location>
        <begin position="162"/>
        <end position="164"/>
    </location>
</feature>
<feature type="helix" evidence="9">
    <location>
        <begin position="168"/>
        <end position="187"/>
    </location>
</feature>
<feature type="strand" evidence="9">
    <location>
        <begin position="190"/>
        <end position="196"/>
    </location>
</feature>
<feature type="strand" evidence="8">
    <location>
        <begin position="200"/>
        <end position="202"/>
    </location>
</feature>
<feature type="strand" evidence="8">
    <location>
        <begin position="205"/>
        <end position="207"/>
    </location>
</feature>
<feature type="strand" evidence="11">
    <location>
        <begin position="211"/>
        <end position="213"/>
    </location>
</feature>
<feature type="helix" evidence="9">
    <location>
        <begin position="214"/>
        <end position="220"/>
    </location>
</feature>
<feature type="strand" evidence="9">
    <location>
        <begin position="222"/>
        <end position="233"/>
    </location>
</feature>
<feature type="strand" evidence="9">
    <location>
        <begin position="235"/>
        <end position="238"/>
    </location>
</feature>
<feature type="strand" evidence="9">
    <location>
        <begin position="241"/>
        <end position="254"/>
    </location>
</feature>
<feature type="strand" evidence="9">
    <location>
        <begin position="259"/>
        <end position="265"/>
    </location>
</feature>
<feature type="strand" evidence="10">
    <location>
        <begin position="268"/>
        <end position="270"/>
    </location>
</feature>
<feature type="helix" evidence="9">
    <location>
        <begin position="272"/>
        <end position="282"/>
    </location>
</feature>
<feature type="strand" evidence="9">
    <location>
        <begin position="285"/>
        <end position="289"/>
    </location>
</feature>
<feature type="strand" evidence="9">
    <location>
        <begin position="292"/>
        <end position="295"/>
    </location>
</feature>
<feature type="strand" evidence="9">
    <location>
        <begin position="298"/>
        <end position="303"/>
    </location>
</feature>
<feature type="helix" evidence="9">
    <location>
        <begin position="304"/>
        <end position="313"/>
    </location>
</feature>
<feature type="helix" evidence="9">
    <location>
        <begin position="315"/>
        <end position="327"/>
    </location>
</feature>
<protein>
    <recommendedName>
        <fullName evidence="2">Protein RecA</fullName>
    </recommendedName>
    <alternativeName>
        <fullName evidence="2">Recombinase A</fullName>
    </alternativeName>
</protein>
<comment type="function">
    <text evidence="4 5 7">Required for homologous recombination (HR) and the bypass of mutagenic DNA lesions (double strand breaks, DSB) by the SOS response. Can catalyze the hydrolysis of ATP in the presence of single-stranded DNA, the ATP-dependent uptake of single-stranded DNA by duplex DNA, and the ATP-dependent hybridization of homologous single-stranded DNAs. Numerous X-ray crystals have been resolved under different conditions which indicate the flexibility of the protein, essential to its function. Gln-196 contributes to this plasticity by acting as a switch residue, which transmits the effect of nucleotide binding to the DNA-binding region.</text>
</comment>
<comment type="subunit">
    <text evidence="1">Polymerizes non-specifically on ssDNA to form filaments. Interacts with and activates LexA leading to autocatalytic cleavage of LexA, which derepresses the SOS regulon and activates DNA repair (By similarity).</text>
</comment>
<comment type="subcellular location">
    <subcellularLocation>
        <location evidence="2">Cytoplasm</location>
    </subcellularLocation>
</comment>
<comment type="disruption phenotype">
    <text evidence="4 5 7">Not essential in the absence of DNA damage, its deletion renders cells much more sensitive to DNA damaging agents such as UV light, ionizing radiation, alkylating agents and DNA gyrase inhibitors and desiccation-induced DSBs. 5-fold decrease in survival, loss of HR, no change in NHEJ (non-homologous end-joining) or single-strand annealing DSB repair.</text>
</comment>
<comment type="similarity">
    <text evidence="2">Belongs to the RecA family.</text>
</comment>